<proteinExistence type="evidence at protein level"/>
<gene>
    <name evidence="8" type="primary">ASO</name>
    <name evidence="7" type="synonym">PAS</name>
</gene>
<organism>
    <name type="scientific">Catharanthus roseus</name>
    <name type="common">Madagascar periwinkle</name>
    <name type="synonym">Vinca rosea</name>
    <dbReference type="NCBI Taxonomy" id="4058"/>
    <lineage>
        <taxon>Eukaryota</taxon>
        <taxon>Viridiplantae</taxon>
        <taxon>Streptophyta</taxon>
        <taxon>Embryophyta</taxon>
        <taxon>Tracheophyta</taxon>
        <taxon>Spermatophyta</taxon>
        <taxon>Magnoliopsida</taxon>
        <taxon>eudicotyledons</taxon>
        <taxon>Gunneridae</taxon>
        <taxon>Pentapetalae</taxon>
        <taxon>asterids</taxon>
        <taxon>lamiids</taxon>
        <taxon>Gentianales</taxon>
        <taxon>Apocynaceae</taxon>
        <taxon>Rauvolfioideae</taxon>
        <taxon>Vinceae</taxon>
        <taxon>Catharanthinae</taxon>
        <taxon>Catharanthus</taxon>
    </lineage>
</organism>
<feature type="signal peptide" evidence="2">
    <location>
        <begin position="1"/>
        <end position="23"/>
    </location>
</feature>
<feature type="chain" id="PRO_5015696778" description="O-acetylstemmadenine oxidase">
    <location>
        <begin position="24"/>
        <end position="529"/>
    </location>
</feature>
<feature type="domain" description="FAD-binding PCMH-type" evidence="4">
    <location>
        <begin position="70"/>
        <end position="244"/>
    </location>
</feature>
<feature type="binding site" evidence="1">
    <location>
        <begin position="102"/>
        <end position="108"/>
    </location>
    <ligand>
        <name>FAD</name>
        <dbReference type="ChEBI" id="CHEBI:57692"/>
    </ligand>
</feature>
<feature type="binding site" evidence="1">
    <location>
        <position position="113"/>
    </location>
    <ligand>
        <name>FAD</name>
        <dbReference type="ChEBI" id="CHEBI:57692"/>
    </ligand>
</feature>
<feature type="binding site" evidence="1">
    <location>
        <begin position="168"/>
        <end position="169"/>
    </location>
    <ligand>
        <name>FAD</name>
        <dbReference type="ChEBI" id="CHEBI:57692"/>
    </ligand>
</feature>
<feature type="binding site" evidence="1">
    <location>
        <begin position="173"/>
        <end position="177"/>
    </location>
    <ligand>
        <name>FAD</name>
        <dbReference type="ChEBI" id="CHEBI:57692"/>
    </ligand>
</feature>
<feature type="binding site" evidence="1">
    <location>
        <position position="183"/>
    </location>
    <ligand>
        <name>FAD</name>
        <dbReference type="ChEBI" id="CHEBI:57692"/>
    </ligand>
</feature>
<feature type="binding site" evidence="1">
    <location>
        <position position="465"/>
    </location>
    <ligand>
        <name>FAD</name>
        <dbReference type="ChEBI" id="CHEBI:57692"/>
    </ligand>
</feature>
<feature type="glycosylation site" description="N-linked (GlcNAc...) asparagine" evidence="3">
    <location>
        <position position="52"/>
    </location>
</feature>
<feature type="glycosylation site" description="N-linked (GlcNAc...) asparagine" evidence="3">
    <location>
        <position position="293"/>
    </location>
</feature>
<feature type="disulfide bond" evidence="1">
    <location>
        <begin position="32"/>
        <end position="92"/>
    </location>
</feature>
<feature type="mutagenesis site" description="Very low enzyme activity leading to the accumulation of O-acetylstemmadenine (OAS) at the expense of catharanthine, vindoline and vindorosine." evidence="6">
    <original>R</original>
    <variation>W</variation>
    <location>
        <position position="188"/>
    </location>
</feature>
<keyword id="KW-0017">Alkaloid metabolism</keyword>
<keyword id="KW-1015">Disulfide bond</keyword>
<keyword id="KW-0256">Endoplasmic reticulum</keyword>
<keyword id="KW-0274">FAD</keyword>
<keyword id="KW-0285">Flavoprotein</keyword>
<keyword id="KW-0325">Glycoprotein</keyword>
<keyword id="KW-0560">Oxidoreductase</keyword>
<keyword id="KW-0732">Signal</keyword>
<keyword id="KW-0926">Vacuole</keyword>
<protein>
    <recommendedName>
        <fullName evidence="8">O-acetylstemmadenine oxidase</fullName>
        <shortName evidence="7 8">CrASO</shortName>
        <ecNumber evidence="5 6">1.21.3.11</ecNumber>
    </recommendedName>
    <alternativeName>
        <fullName evidence="7">Precondylocarpine acetate synthase</fullName>
    </alternativeName>
</protein>
<name>ASO_CATRO</name>
<sequence length="529" mass="59214">MIKKVPIVLSIFCFLLLLSSSHGSIPEAFLNCISNKFSLDVSILNILHVPSNSSYDSVLKSTIQNPRFLKSPKPLAIITPVLHSHVQSAVICTKQAGLQIRIRSGGADYEGLSYRSEVPFILLDLQNLRSISVDIEDNSAWVESGATIGEFYHEIAQNSPVHAFPAGVSSSVGIGGHLSSGGFGTLLRKYGLAADNIIDAKIVDARGRILDRESMGEDLFWAIRGGGGASFGVIVSWKVKLVKVPPMVTVFILSKTYEEGGLDLLHKWQYIEHKLPEDLFLAVSIMDDSSSGNKTLMAGFMSLFLGKTEDLLKVMAENFPQLGLKKEDCLEMNWIDAAMYFSGHPIGESRSVLKNRESHLPKTCVSIKSDFIQEPQSMDALEKLWKFCREEENSPIILMLPLGGMMSKISESEIPFPYRKDVIYSMIYEIVWNCEDDESSEEYIDGLGRLEELMTPYVKQPRGSWFSTRNLYTGKNKGPGTTYSKAKEWGFRYFNNNFKKLALIKGQVDPENFFYYEQSIPPLHLQVEL</sequence>
<comment type="function">
    <text evidence="5 6">Component of the seco-iridoid and derivatives monoterpenoid indole alkaloids (MIAs, e.g. vinblastine, catharanthine, tabersonine, vincadifformine, vindoline, vincristine, quinine and strychnine) biosynthesis pathway. Converts O-acetylstemmadenine (OAS) to reactive acetylated intermediates, likely dihydroprecondylocarpine acetate.</text>
</comment>
<comment type="catalytic activity">
    <reaction evidence="5 6">
        <text>O-acetyl-15alpha-stemmadenine + O2 = precondylocarpine acetate + H2O2</text>
        <dbReference type="Rhea" id="RHEA:58572"/>
        <dbReference type="ChEBI" id="CHEBI:15379"/>
        <dbReference type="ChEBI" id="CHEBI:16240"/>
        <dbReference type="ChEBI" id="CHEBI:142673"/>
        <dbReference type="ChEBI" id="CHEBI:142769"/>
        <dbReference type="EC" id="1.21.3.11"/>
    </reaction>
    <physiologicalReaction direction="left-to-right" evidence="5 6">
        <dbReference type="Rhea" id="RHEA:58573"/>
    </physiologicalReaction>
</comment>
<comment type="cofactor">
    <cofactor evidence="1">
        <name>FAD</name>
        <dbReference type="ChEBI" id="CHEBI:57692"/>
    </cofactor>
</comment>
<comment type="pathway">
    <text evidence="5 6">Alkaloid biosynthesis.</text>
</comment>
<comment type="subcellular location">
    <subcellularLocation>
        <location evidence="5">Endoplasmic reticulum</location>
    </subcellularLocation>
    <subcellularLocation>
        <location evidence="5">Vacuole</location>
    </subcellularLocation>
    <subcellularLocation>
        <location evidence="5">Vesicle</location>
    </subcellularLocation>
    <text evidence="5">First targeted to endoplasmic reticulum (ER) and progressively secreted to vacuole by ER-derived vesicles.</text>
</comment>
<comment type="tissue specificity">
    <text evidence="6">Expressed in leaf epidermis.</text>
</comment>
<comment type="disruption phenotype">
    <text evidence="5 6">Accumulates O-acetylstemmadenine (OAS) at the expense of catharanthine and vindoline (PubMed:29724909, PubMed:30256480). Strong accumulation of stemmadenine acetate (PubMed:29724909).</text>
</comment>
<comment type="similarity">
    <text evidence="9">Belongs to the oxygen-dependent FAD-linked oxidoreductase family.</text>
</comment>
<dbReference type="EC" id="1.21.3.11" evidence="5 6"/>
<dbReference type="EMBL" id="MH136588">
    <property type="protein sequence ID" value="AYE56095.1"/>
    <property type="molecule type" value="mRNA"/>
</dbReference>
<dbReference type="EMBL" id="MH213134">
    <property type="protein sequence ID" value="AWJ76616.1"/>
    <property type="molecule type" value="mRNA"/>
</dbReference>
<dbReference type="SMR" id="A0A2S1XB67"/>
<dbReference type="GlyCosmos" id="A0A2S1XB67">
    <property type="glycosylation" value="2 sites, No reported glycans"/>
</dbReference>
<dbReference type="KEGG" id="ag:AWJ76616"/>
<dbReference type="BioCyc" id="MetaCyc:MONOMER-20637"/>
<dbReference type="GO" id="GO:0005783">
    <property type="term" value="C:endoplasmic reticulum"/>
    <property type="evidence" value="ECO:0007669"/>
    <property type="project" value="UniProtKB-SubCell"/>
</dbReference>
<dbReference type="GO" id="GO:0005773">
    <property type="term" value="C:vacuole"/>
    <property type="evidence" value="ECO:0007669"/>
    <property type="project" value="UniProtKB-SubCell"/>
</dbReference>
<dbReference type="GO" id="GO:0031982">
    <property type="term" value="C:vesicle"/>
    <property type="evidence" value="ECO:0007669"/>
    <property type="project" value="UniProtKB-SubCell"/>
</dbReference>
<dbReference type="GO" id="GO:0071949">
    <property type="term" value="F:FAD binding"/>
    <property type="evidence" value="ECO:0007669"/>
    <property type="project" value="InterPro"/>
</dbReference>
<dbReference type="GO" id="GO:0016491">
    <property type="term" value="F:oxidoreductase activity"/>
    <property type="evidence" value="ECO:0007669"/>
    <property type="project" value="UniProtKB-KW"/>
</dbReference>
<dbReference type="GO" id="GO:0009820">
    <property type="term" value="P:alkaloid metabolic process"/>
    <property type="evidence" value="ECO:0007669"/>
    <property type="project" value="UniProtKB-KW"/>
</dbReference>
<dbReference type="Gene3D" id="3.30.465.10">
    <property type="match status" value="1"/>
</dbReference>
<dbReference type="Gene3D" id="3.40.462.20">
    <property type="match status" value="1"/>
</dbReference>
<dbReference type="Gene3D" id="3.30.43.10">
    <property type="entry name" value="Uridine Diphospho-n-acetylenolpyruvylglucosamine Reductase, domain 2"/>
    <property type="match status" value="1"/>
</dbReference>
<dbReference type="InterPro" id="IPR012951">
    <property type="entry name" value="BBE"/>
</dbReference>
<dbReference type="InterPro" id="IPR016166">
    <property type="entry name" value="FAD-bd_PCMH"/>
</dbReference>
<dbReference type="InterPro" id="IPR036318">
    <property type="entry name" value="FAD-bd_PCMH-like_sf"/>
</dbReference>
<dbReference type="InterPro" id="IPR016167">
    <property type="entry name" value="FAD-bd_PCMH_sub1"/>
</dbReference>
<dbReference type="InterPro" id="IPR016169">
    <property type="entry name" value="FAD-bd_PCMH_sub2"/>
</dbReference>
<dbReference type="InterPro" id="IPR006094">
    <property type="entry name" value="Oxid_FAD_bind_N"/>
</dbReference>
<dbReference type="PANTHER" id="PTHR32448">
    <property type="entry name" value="OS08G0158400 PROTEIN"/>
    <property type="match status" value="1"/>
</dbReference>
<dbReference type="Pfam" id="PF08031">
    <property type="entry name" value="BBE"/>
    <property type="match status" value="1"/>
</dbReference>
<dbReference type="Pfam" id="PF01565">
    <property type="entry name" value="FAD_binding_4"/>
    <property type="match status" value="1"/>
</dbReference>
<dbReference type="SUPFAM" id="SSF56176">
    <property type="entry name" value="FAD-binding/transporter-associated domain-like"/>
    <property type="match status" value="1"/>
</dbReference>
<dbReference type="PROSITE" id="PS51387">
    <property type="entry name" value="FAD_PCMH"/>
    <property type="match status" value="1"/>
</dbReference>
<evidence type="ECO:0000250" key="1">
    <source>
        <dbReference type="UniProtKB" id="O64743"/>
    </source>
</evidence>
<evidence type="ECO:0000255" key="2"/>
<evidence type="ECO:0000255" key="3">
    <source>
        <dbReference type="PROSITE-ProRule" id="PRU00498"/>
    </source>
</evidence>
<evidence type="ECO:0000255" key="4">
    <source>
        <dbReference type="PROSITE-ProRule" id="PRU00718"/>
    </source>
</evidence>
<evidence type="ECO:0000269" key="5">
    <source>
    </source>
</evidence>
<evidence type="ECO:0000269" key="6">
    <source>
    </source>
</evidence>
<evidence type="ECO:0000303" key="7">
    <source>
    </source>
</evidence>
<evidence type="ECO:0000303" key="8">
    <source>
    </source>
</evidence>
<evidence type="ECO:0000305" key="9"/>
<reference key="1">
    <citation type="journal article" date="2019" name="Plant J.">
        <title>Completion of the canonical pathway for assembly of anticancer drugs vincristine/vinblastine in Catharanthus roseus.</title>
        <authorList>
            <person name="Qu Y."/>
            <person name="Safonova O."/>
            <person name="De Luca V."/>
        </authorList>
    </citation>
    <scope>NUCLEOTIDE SEQUENCE [MRNA]</scope>
    <scope>FUNCTION</scope>
    <scope>DISRUPTION PHENOTYPE</scope>
    <scope>MUTAGENESIS OF ARG-188</scope>
    <scope>CATALYTIC ACTIVITY</scope>
    <scope>TISSUE SPECIFICITY</scope>
    <scope>PATHWAY</scope>
    <scope>IDENTIFICATION BY MASS SPECTROMETRY</scope>
    <source>
        <strain>cv. Little Delicata</strain>
    </source>
</reference>
<reference key="2">
    <citation type="journal article" date="2018" name="Science">
        <title>Missing enzymes in the biosynthesis of the anticancer drug vinblastine in Madagascar periwinkle.</title>
        <authorList>
            <person name="Caputi L."/>
            <person name="Franke J."/>
            <person name="Farrow S.C."/>
            <person name="Chung K."/>
            <person name="Payne R.M.E."/>
            <person name="Nguyen T.-D."/>
            <person name="Dang T.-T.T."/>
            <person name="Soares Teto Carqueijeiro I."/>
            <person name="Koudounas K."/>
            <person name="Duge de Bernonville T."/>
            <person name="Ameyaw B."/>
            <person name="Jones D.M."/>
            <person name="Vieira I.J.C."/>
            <person name="Courdavault V."/>
            <person name="O'Connor S.E."/>
        </authorList>
    </citation>
    <scope>NUCLEOTIDE SEQUENCE [MRNA]</scope>
    <scope>FUNCTION</scope>
    <scope>DISRUPTION PHENOTYPE</scope>
    <scope>CATALYTIC ACTIVITY</scope>
    <scope>PATHWAY</scope>
    <scope>SUBCELLULAR LOCATION</scope>
    <source>
        <strain>cv. Little Bright Eyes</strain>
    </source>
</reference>
<accession>A0A2S1XB67</accession>